<gene>
    <name type="primary">CATHL2</name>
    <name type="synonym">BAC5</name>
</gene>
<protein>
    <recommendedName>
        <fullName>Cathelicidin-2</fullName>
    </recommendedName>
    <alternativeName>
        <fullName>Bactenecin-5</fullName>
        <shortName>Bac5</shortName>
    </alternativeName>
    <alternativeName>
        <fullName>ChBac5</fullName>
    </alternativeName>
</protein>
<dbReference type="EMBL" id="Y18873">
    <property type="protein sequence ID" value="CAC80206.1"/>
    <property type="molecule type" value="mRNA"/>
</dbReference>
<dbReference type="RefSeq" id="NP_001272506.1">
    <property type="nucleotide sequence ID" value="NM_001285577.1"/>
</dbReference>
<dbReference type="SMR" id="P82018"/>
<dbReference type="STRING" id="9925.ENSCHIP00000028231"/>
<dbReference type="Ensembl" id="ENSCHIT00000036100.1">
    <property type="protein sequence ID" value="ENSCHIP00000028231.1"/>
    <property type="gene ID" value="ENSCHIG00000023827.1"/>
</dbReference>
<dbReference type="Ensembl" id="ENSCHIT00020027154">
    <property type="protein sequence ID" value="ENSCHIP00020019951"/>
    <property type="gene ID" value="ENSCHIG00020013162"/>
</dbReference>
<dbReference type="Ensembl" id="ENSCHIT00040056360">
    <property type="protein sequence ID" value="ENSCHIP00040045148"/>
    <property type="gene ID" value="ENSCHIG00040026267"/>
</dbReference>
<dbReference type="GeneID" id="100861213"/>
<dbReference type="KEGG" id="chx:100861213"/>
<dbReference type="CTD" id="443356"/>
<dbReference type="GeneTree" id="ENSGT00390000000410"/>
<dbReference type="OMA" id="TIMETEC"/>
<dbReference type="OrthoDB" id="9930485at2759"/>
<dbReference type="Proteomes" id="UP000291000">
    <property type="component" value="Chromosome 22"/>
</dbReference>
<dbReference type="Proteomes" id="UP000694566">
    <property type="component" value="Unplaced"/>
</dbReference>
<dbReference type="Bgee" id="ENSCHIG00000023827">
    <property type="expression patterns" value="Expressed in spleen and 12 other cell types or tissues"/>
</dbReference>
<dbReference type="GO" id="GO:0005615">
    <property type="term" value="C:extracellular space"/>
    <property type="evidence" value="ECO:0007669"/>
    <property type="project" value="TreeGrafter"/>
</dbReference>
<dbReference type="GO" id="GO:0001530">
    <property type="term" value="F:lipopolysaccharide binding"/>
    <property type="evidence" value="ECO:0007669"/>
    <property type="project" value="TreeGrafter"/>
</dbReference>
<dbReference type="GO" id="GO:0061844">
    <property type="term" value="P:antimicrobial humoral immune response mediated by antimicrobial peptide"/>
    <property type="evidence" value="ECO:0007669"/>
    <property type="project" value="TreeGrafter"/>
</dbReference>
<dbReference type="GO" id="GO:0050829">
    <property type="term" value="P:defense response to Gram-negative bacterium"/>
    <property type="evidence" value="ECO:0007669"/>
    <property type="project" value="TreeGrafter"/>
</dbReference>
<dbReference type="GO" id="GO:0050830">
    <property type="term" value="P:defense response to Gram-positive bacterium"/>
    <property type="evidence" value="ECO:0007669"/>
    <property type="project" value="TreeGrafter"/>
</dbReference>
<dbReference type="GO" id="GO:0045087">
    <property type="term" value="P:innate immune response"/>
    <property type="evidence" value="ECO:0007669"/>
    <property type="project" value="TreeGrafter"/>
</dbReference>
<dbReference type="FunFam" id="3.10.450.10:FF:000003">
    <property type="entry name" value="Cathelicidin antimicrobial peptide"/>
    <property type="match status" value="1"/>
</dbReference>
<dbReference type="Gene3D" id="3.10.450.10">
    <property type="match status" value="1"/>
</dbReference>
<dbReference type="InterPro" id="IPR001894">
    <property type="entry name" value="Cathelicidin-like"/>
</dbReference>
<dbReference type="InterPro" id="IPR018216">
    <property type="entry name" value="Cathelicidin_CS"/>
</dbReference>
<dbReference type="InterPro" id="IPR046350">
    <property type="entry name" value="Cystatin_sf"/>
</dbReference>
<dbReference type="PANTHER" id="PTHR10206">
    <property type="entry name" value="CATHELICIDIN"/>
    <property type="match status" value="1"/>
</dbReference>
<dbReference type="PANTHER" id="PTHR10206:SF2">
    <property type="entry name" value="CATHELICIDIN ANTIMICROBIAL PEPTIDE"/>
    <property type="match status" value="1"/>
</dbReference>
<dbReference type="Pfam" id="PF00666">
    <property type="entry name" value="Cathelicidins"/>
    <property type="match status" value="1"/>
</dbReference>
<dbReference type="SUPFAM" id="SSF54403">
    <property type="entry name" value="Cystatin/monellin"/>
    <property type="match status" value="1"/>
</dbReference>
<dbReference type="PROSITE" id="PS00946">
    <property type="entry name" value="CATHELICIDINS_1"/>
    <property type="match status" value="1"/>
</dbReference>
<dbReference type="PROSITE" id="PS00947">
    <property type="entry name" value="CATHELICIDINS_2"/>
    <property type="match status" value="1"/>
</dbReference>
<organism>
    <name type="scientific">Capra hircus</name>
    <name type="common">Goat</name>
    <dbReference type="NCBI Taxonomy" id="9925"/>
    <lineage>
        <taxon>Eukaryota</taxon>
        <taxon>Metazoa</taxon>
        <taxon>Chordata</taxon>
        <taxon>Craniata</taxon>
        <taxon>Vertebrata</taxon>
        <taxon>Euteleostomi</taxon>
        <taxon>Mammalia</taxon>
        <taxon>Eutheria</taxon>
        <taxon>Laurasiatheria</taxon>
        <taxon>Artiodactyla</taxon>
        <taxon>Ruminantia</taxon>
        <taxon>Pecora</taxon>
        <taxon>Bovidae</taxon>
        <taxon>Caprinae</taxon>
        <taxon>Capra</taxon>
    </lineage>
</organism>
<evidence type="ECO:0000250" key="1"/>
<evidence type="ECO:0000250" key="2">
    <source>
        <dbReference type="UniProtKB" id="P19660"/>
    </source>
</evidence>
<evidence type="ECO:0000255" key="3"/>
<evidence type="ECO:0000256" key="4">
    <source>
        <dbReference type="SAM" id="MobiDB-lite"/>
    </source>
</evidence>
<evidence type="ECO:0000269" key="5">
    <source>
    </source>
</evidence>
<evidence type="ECO:0000305" key="6"/>
<accession>P82018</accession>
<accession>Q4JFB9</accession>
<proteinExistence type="evidence at protein level"/>
<name>CTHL2_CAPHI</name>
<keyword id="KW-0027">Amidation</keyword>
<keyword id="KW-0044">Antibiotic</keyword>
<keyword id="KW-0929">Antimicrobial</keyword>
<keyword id="KW-0903">Direct protein sequencing</keyword>
<keyword id="KW-1015">Disulfide bond</keyword>
<keyword id="KW-0873">Pyrrolidone carboxylic acid</keyword>
<keyword id="KW-1185">Reference proteome</keyword>
<keyword id="KW-0677">Repeat</keyword>
<keyword id="KW-0964">Secreted</keyword>
<keyword id="KW-0732">Signal</keyword>
<comment type="function">
    <text evidence="5">Binds to the lipid A moiety of bacterial lipopolysaccharides (LPS), a glycolipid present in the outer membrane of all Gram-negative bacteria. Shows a potent antimicrobial activity against the Gram-negative bacteria E.coli, S.typhimurium and P.aeruginosa. Less active against the Gram-positive bacteria S.aureus, L.monocytogenes and B.subtilis.</text>
</comment>
<comment type="subcellular location">
    <subcellularLocation>
        <location>Secreted</location>
    </subcellularLocation>
</comment>
<comment type="domain">
    <text>BAC5 sequence consists almost exclusively of X-P-P-Y repeats.</text>
</comment>
<comment type="PTM">
    <text>Elastase is responsible for its maturation.</text>
</comment>
<comment type="similarity">
    <text evidence="6">Belongs to the cathelicidin family.</text>
</comment>
<feature type="signal peptide" evidence="3">
    <location>
        <begin position="1"/>
        <end position="29"/>
    </location>
</feature>
<feature type="propeptide" id="PRO_0000004703" evidence="5">
    <location>
        <begin position="30"/>
        <end position="130"/>
    </location>
</feature>
<feature type="peptide" id="PRO_0000004704" description="Cathelicidin-2">
    <location>
        <begin position="131"/>
        <end position="173"/>
    </location>
</feature>
<feature type="propeptide" id="PRO_0000004705" description="Removed in mature form">
    <location>
        <begin position="174"/>
        <end position="176"/>
    </location>
</feature>
<feature type="region of interest" description="Disordered" evidence="4">
    <location>
        <begin position="135"/>
        <end position="176"/>
    </location>
</feature>
<feature type="compositionally biased region" description="Pro residues" evidence="4">
    <location>
        <begin position="141"/>
        <end position="176"/>
    </location>
</feature>
<feature type="modified residue" description="Pyrrolidone carboxylic acid" evidence="2">
    <location>
        <position position="30"/>
    </location>
</feature>
<feature type="modified residue" description="Proline amide" evidence="2">
    <location>
        <position position="173"/>
    </location>
</feature>
<feature type="disulfide bond" evidence="1">
    <location>
        <begin position="85"/>
        <end position="96"/>
    </location>
</feature>
<feature type="disulfide bond" evidence="1">
    <location>
        <begin position="107"/>
        <end position="124"/>
    </location>
</feature>
<sequence>METQGASLSLGRWSLWLLLLGLVVPLASAQALSYREAVLRAVGQLNERSSEANLYRLLELDPAPNDEVDPGTRKPVSFTVKETVCPRTTQQPPEECDFKENGLVKQCVGTVTLDPSNDQFDINCNELQSVRFRPPIRRPPIRPPFNPPFRPPVRPPFRPPFRPPFRPPIGPFPGRR</sequence>
<reference key="1">
    <citation type="submission" date="1999-03" db="EMBL/GenBank/DDBJ databases">
        <authorList>
            <person name="Zhao C."/>
        </authorList>
    </citation>
    <scope>NUCLEOTIDE SEQUENCE [MRNA]</scope>
    <source>
        <tissue>Bone marrow</tissue>
    </source>
</reference>
<reference key="2">
    <citation type="journal article" date="1999" name="Infect. Immun.">
        <title>Purification and properties of proline-rich antimicrobial peptides from sheep and goat leukocytes.</title>
        <authorList>
            <person name="Shamova O."/>
            <person name="Brogden K.A."/>
            <person name="Zhao C."/>
            <person name="Nguyen T."/>
            <person name="Kokryakov V.N."/>
            <person name="Lehrer R.I."/>
        </authorList>
    </citation>
    <scope>PROTEIN SEQUENCE OF 131-149 AND 151-153</scope>
    <scope>FUNCTION</scope>
    <source>
        <tissue>Bone marrow</tissue>
        <tissue>Leukocyte</tissue>
    </source>
</reference>